<sequence>MADRTEQILTPSQLNTLARDLLEGSFPLVWVEAELGNVTRPASGHLYFTLKDARAQIRCAMFKPKSTWLKFQPREGLRVLARGRLTLYEARGDYQLVLDHMEEAGEGALRRAFEELRARLAAEGVFDAERKQPLPAHVRRLAVITSPSGAAVRDVLSVLARRFPLLEVDILPSLVQGDSAAAQITSLLQRADASGRYDVILITRGGGSLEDLWAFNDERLARAIAAAHTPVVSAVGHETDVSLSDFAADVRAPTPSVAAELLVPDQRELVARVRRAQARLSQLQQHTLGQAMQHADRLALRLRARSPQARLQLLQRRQEDAARHLRARMQHILERLQARVQRAQAGVQSHSPQRHLAPLQQRLRAAHPQAAMQRRLQQDHLHLRGLVRSLEAVSPLATVARGYAIVTRQADGSVVRSAAELTQGDRLRAQLADGSVTVVVDTSETG</sequence>
<gene>
    <name evidence="1" type="primary">xseA</name>
    <name type="ordered locus">XCC2303</name>
</gene>
<reference key="1">
    <citation type="journal article" date="2002" name="Nature">
        <title>Comparison of the genomes of two Xanthomonas pathogens with differing host specificities.</title>
        <authorList>
            <person name="da Silva A.C.R."/>
            <person name="Ferro J.A."/>
            <person name="Reinach F.C."/>
            <person name="Farah C.S."/>
            <person name="Furlan L.R."/>
            <person name="Quaggio R.B."/>
            <person name="Monteiro-Vitorello C.B."/>
            <person name="Van Sluys M.A."/>
            <person name="Almeida N.F. Jr."/>
            <person name="Alves L.M.C."/>
            <person name="do Amaral A.M."/>
            <person name="Bertolini M.C."/>
            <person name="Camargo L.E.A."/>
            <person name="Camarotte G."/>
            <person name="Cannavan F."/>
            <person name="Cardozo J."/>
            <person name="Chambergo F."/>
            <person name="Ciapina L.P."/>
            <person name="Cicarelli R.M.B."/>
            <person name="Coutinho L.L."/>
            <person name="Cursino-Santos J.R."/>
            <person name="El-Dorry H."/>
            <person name="Faria J.B."/>
            <person name="Ferreira A.J.S."/>
            <person name="Ferreira R.C.C."/>
            <person name="Ferro M.I.T."/>
            <person name="Formighieri E.F."/>
            <person name="Franco M.C."/>
            <person name="Greggio C.C."/>
            <person name="Gruber A."/>
            <person name="Katsuyama A.M."/>
            <person name="Kishi L.T."/>
            <person name="Leite R.P."/>
            <person name="Lemos E.G.M."/>
            <person name="Lemos M.V.F."/>
            <person name="Locali E.C."/>
            <person name="Machado M.A."/>
            <person name="Madeira A.M.B.N."/>
            <person name="Martinez-Rossi N.M."/>
            <person name="Martins E.C."/>
            <person name="Meidanis J."/>
            <person name="Menck C.F.M."/>
            <person name="Miyaki C.Y."/>
            <person name="Moon D.H."/>
            <person name="Moreira L.M."/>
            <person name="Novo M.T.M."/>
            <person name="Okura V.K."/>
            <person name="Oliveira M.C."/>
            <person name="Oliveira V.R."/>
            <person name="Pereira H.A."/>
            <person name="Rossi A."/>
            <person name="Sena J.A.D."/>
            <person name="Silva C."/>
            <person name="de Souza R.F."/>
            <person name="Spinola L.A.F."/>
            <person name="Takita M.A."/>
            <person name="Tamura R.E."/>
            <person name="Teixeira E.C."/>
            <person name="Tezza R.I.D."/>
            <person name="Trindade dos Santos M."/>
            <person name="Truffi D."/>
            <person name="Tsai S.M."/>
            <person name="White F.F."/>
            <person name="Setubal J.C."/>
            <person name="Kitajima J.P."/>
        </authorList>
    </citation>
    <scope>NUCLEOTIDE SEQUENCE [LARGE SCALE GENOMIC DNA]</scope>
    <source>
        <strain>ATCC 33913 / DSM 3586 / NCPPB 528 / LMG 568 / P 25</strain>
    </source>
</reference>
<organism>
    <name type="scientific">Xanthomonas campestris pv. campestris (strain ATCC 33913 / DSM 3586 / NCPPB 528 / LMG 568 / P 25)</name>
    <dbReference type="NCBI Taxonomy" id="190485"/>
    <lineage>
        <taxon>Bacteria</taxon>
        <taxon>Pseudomonadati</taxon>
        <taxon>Pseudomonadota</taxon>
        <taxon>Gammaproteobacteria</taxon>
        <taxon>Lysobacterales</taxon>
        <taxon>Lysobacteraceae</taxon>
        <taxon>Xanthomonas</taxon>
    </lineage>
</organism>
<dbReference type="EC" id="3.1.11.6" evidence="1"/>
<dbReference type="EMBL" id="AE008922">
    <property type="protein sequence ID" value="AAM41582.1"/>
    <property type="molecule type" value="Genomic_DNA"/>
</dbReference>
<dbReference type="RefSeq" id="NP_637658.1">
    <property type="nucleotide sequence ID" value="NC_003902.1"/>
</dbReference>
<dbReference type="RefSeq" id="WP_011037447.1">
    <property type="nucleotide sequence ID" value="NC_003902.1"/>
</dbReference>
<dbReference type="SMR" id="Q8P8D9"/>
<dbReference type="STRING" id="190485.XCC2303"/>
<dbReference type="EnsemblBacteria" id="AAM41582">
    <property type="protein sequence ID" value="AAM41582"/>
    <property type="gene ID" value="XCC2303"/>
</dbReference>
<dbReference type="KEGG" id="xcc:XCC2303"/>
<dbReference type="PATRIC" id="fig|190485.4.peg.2453"/>
<dbReference type="eggNOG" id="COG1570">
    <property type="taxonomic scope" value="Bacteria"/>
</dbReference>
<dbReference type="HOGENOM" id="CLU_023625_3_1_6"/>
<dbReference type="OrthoDB" id="9802795at2"/>
<dbReference type="Proteomes" id="UP000001010">
    <property type="component" value="Chromosome"/>
</dbReference>
<dbReference type="GO" id="GO:0005737">
    <property type="term" value="C:cytoplasm"/>
    <property type="evidence" value="ECO:0007669"/>
    <property type="project" value="UniProtKB-SubCell"/>
</dbReference>
<dbReference type="GO" id="GO:0009318">
    <property type="term" value="C:exodeoxyribonuclease VII complex"/>
    <property type="evidence" value="ECO:0007669"/>
    <property type="project" value="InterPro"/>
</dbReference>
<dbReference type="GO" id="GO:0008855">
    <property type="term" value="F:exodeoxyribonuclease VII activity"/>
    <property type="evidence" value="ECO:0007669"/>
    <property type="project" value="UniProtKB-UniRule"/>
</dbReference>
<dbReference type="GO" id="GO:0003676">
    <property type="term" value="F:nucleic acid binding"/>
    <property type="evidence" value="ECO:0007669"/>
    <property type="project" value="InterPro"/>
</dbReference>
<dbReference type="GO" id="GO:0006308">
    <property type="term" value="P:DNA catabolic process"/>
    <property type="evidence" value="ECO:0007669"/>
    <property type="project" value="UniProtKB-UniRule"/>
</dbReference>
<dbReference type="CDD" id="cd04489">
    <property type="entry name" value="ExoVII_LU_OBF"/>
    <property type="match status" value="1"/>
</dbReference>
<dbReference type="HAMAP" id="MF_00378">
    <property type="entry name" value="Exonuc_7_L"/>
    <property type="match status" value="1"/>
</dbReference>
<dbReference type="InterPro" id="IPR003753">
    <property type="entry name" value="Exonuc_VII_L"/>
</dbReference>
<dbReference type="InterPro" id="IPR020579">
    <property type="entry name" value="Exonuc_VII_lsu_C"/>
</dbReference>
<dbReference type="InterPro" id="IPR025824">
    <property type="entry name" value="OB-fold_nuc-bd_dom"/>
</dbReference>
<dbReference type="NCBIfam" id="TIGR00237">
    <property type="entry name" value="xseA"/>
    <property type="match status" value="1"/>
</dbReference>
<dbReference type="PANTHER" id="PTHR30008">
    <property type="entry name" value="EXODEOXYRIBONUCLEASE 7 LARGE SUBUNIT"/>
    <property type="match status" value="1"/>
</dbReference>
<dbReference type="PANTHER" id="PTHR30008:SF0">
    <property type="entry name" value="EXODEOXYRIBONUCLEASE 7 LARGE SUBUNIT"/>
    <property type="match status" value="1"/>
</dbReference>
<dbReference type="Pfam" id="PF02601">
    <property type="entry name" value="Exonuc_VII_L"/>
    <property type="match status" value="1"/>
</dbReference>
<dbReference type="Pfam" id="PF13742">
    <property type="entry name" value="tRNA_anti_2"/>
    <property type="match status" value="1"/>
</dbReference>
<protein>
    <recommendedName>
        <fullName evidence="1">Exodeoxyribonuclease 7 large subunit</fullName>
        <ecNumber evidence="1">3.1.11.6</ecNumber>
    </recommendedName>
    <alternativeName>
        <fullName evidence="1">Exodeoxyribonuclease VII large subunit</fullName>
        <shortName evidence="1">Exonuclease VII large subunit</shortName>
    </alternativeName>
</protein>
<proteinExistence type="inferred from homology"/>
<comment type="function">
    <text evidence="1">Bidirectionally degrades single-stranded DNA into large acid-insoluble oligonucleotides, which are then degraded further into small acid-soluble oligonucleotides.</text>
</comment>
<comment type="catalytic activity">
    <reaction evidence="1">
        <text>Exonucleolytic cleavage in either 5'- to 3'- or 3'- to 5'-direction to yield nucleoside 5'-phosphates.</text>
        <dbReference type="EC" id="3.1.11.6"/>
    </reaction>
</comment>
<comment type="subunit">
    <text evidence="1">Heterooligomer composed of large and small subunits.</text>
</comment>
<comment type="subcellular location">
    <subcellularLocation>
        <location evidence="1">Cytoplasm</location>
    </subcellularLocation>
</comment>
<comment type="similarity">
    <text evidence="1">Belongs to the XseA family.</text>
</comment>
<keyword id="KW-0963">Cytoplasm</keyword>
<keyword id="KW-0269">Exonuclease</keyword>
<keyword id="KW-0378">Hydrolase</keyword>
<keyword id="KW-0540">Nuclease</keyword>
<keyword id="KW-1185">Reference proteome</keyword>
<evidence type="ECO:0000255" key="1">
    <source>
        <dbReference type="HAMAP-Rule" id="MF_00378"/>
    </source>
</evidence>
<feature type="chain" id="PRO_0000197904" description="Exodeoxyribonuclease 7 large subunit">
    <location>
        <begin position="1"/>
        <end position="446"/>
    </location>
</feature>
<name>EX7L_XANCP</name>
<accession>Q8P8D9</accession>